<proteinExistence type="inferred from homology"/>
<comment type="catalytic activity">
    <reaction evidence="1">
        <text>beta-D-fructose 1,6-bisphosphate + H2O = beta-D-fructose 6-phosphate + phosphate</text>
        <dbReference type="Rhea" id="RHEA:11064"/>
        <dbReference type="ChEBI" id="CHEBI:15377"/>
        <dbReference type="ChEBI" id="CHEBI:32966"/>
        <dbReference type="ChEBI" id="CHEBI:43474"/>
        <dbReference type="ChEBI" id="CHEBI:57634"/>
        <dbReference type="EC" id="3.1.3.11"/>
    </reaction>
</comment>
<comment type="cofactor">
    <cofactor evidence="1">
        <name>Mg(2+)</name>
        <dbReference type="ChEBI" id="CHEBI:18420"/>
    </cofactor>
    <text evidence="1">Binds 2 magnesium ions per subunit.</text>
</comment>
<comment type="pathway">
    <text evidence="1">Carbohydrate biosynthesis; gluconeogenesis.</text>
</comment>
<comment type="subunit">
    <text evidence="1">Homotetramer.</text>
</comment>
<comment type="subcellular location">
    <subcellularLocation>
        <location evidence="1">Cytoplasm</location>
    </subcellularLocation>
</comment>
<comment type="similarity">
    <text evidence="1">Belongs to the FBPase class 1 family.</text>
</comment>
<evidence type="ECO:0000255" key="1">
    <source>
        <dbReference type="HAMAP-Rule" id="MF_01855"/>
    </source>
</evidence>
<sequence>MSEIRTLGEFIVAKQHDFPHASGELSSLIGSIKLAAKIVNREINKAGLVDITGASGEENIQGEQQQKLDVYANDKFKAALEARDQVCGVASEEEDEAVAFNKELNQNAKYVVLMDPLDGSSNIDVNVSVGTIFSIYRRISPIGTPATEEDFLQPGHKQVAAGYIIYGSSTMLVYTTGNGVHGFTYDPSLGVFCLSHENMQVPKDGNIYSINEGNYIRFPEGIKQYLKFCQESKPEDNRPYTSRYIGSLVADFHRNLLKGGIYLYPSTQAYPNGKLRLLYECNPMAMLIEEAGGKATDGEQRILDIKPSELHQRVPFFVGSTNMVDKVHAFLDEWRD</sequence>
<name>F16PA_ALIFM</name>
<keyword id="KW-0119">Carbohydrate metabolism</keyword>
<keyword id="KW-0963">Cytoplasm</keyword>
<keyword id="KW-0378">Hydrolase</keyword>
<keyword id="KW-0460">Magnesium</keyword>
<keyword id="KW-0479">Metal-binding</keyword>
<reference key="1">
    <citation type="submission" date="2008-08" db="EMBL/GenBank/DDBJ databases">
        <title>Complete sequence of Vibrio fischeri strain MJ11.</title>
        <authorList>
            <person name="Mandel M.J."/>
            <person name="Stabb E.V."/>
            <person name="Ruby E.G."/>
            <person name="Ferriera S."/>
            <person name="Johnson J."/>
            <person name="Kravitz S."/>
            <person name="Beeson K."/>
            <person name="Sutton G."/>
            <person name="Rogers Y.-H."/>
            <person name="Friedman R."/>
            <person name="Frazier M."/>
            <person name="Venter J.C."/>
        </authorList>
    </citation>
    <scope>NUCLEOTIDE SEQUENCE [LARGE SCALE GENOMIC DNA]</scope>
    <source>
        <strain>MJ11</strain>
    </source>
</reference>
<protein>
    <recommendedName>
        <fullName evidence="1">Fructose-1,6-bisphosphatase class 1</fullName>
        <shortName evidence="1">FBPase class 1</shortName>
        <ecNumber evidence="1">3.1.3.11</ecNumber>
    </recommendedName>
    <alternativeName>
        <fullName evidence="1">D-fructose-1,6-bisphosphate 1-phosphohydrolase class 1</fullName>
    </alternativeName>
</protein>
<accession>B5FGE3</accession>
<feature type="chain" id="PRO_0000364741" description="Fructose-1,6-bisphosphatase class 1">
    <location>
        <begin position="1"/>
        <end position="336"/>
    </location>
</feature>
<feature type="binding site" evidence="1">
    <location>
        <position position="92"/>
    </location>
    <ligand>
        <name>Mg(2+)</name>
        <dbReference type="ChEBI" id="CHEBI:18420"/>
        <label>1</label>
    </ligand>
</feature>
<feature type="binding site" evidence="1">
    <location>
        <position position="115"/>
    </location>
    <ligand>
        <name>Mg(2+)</name>
        <dbReference type="ChEBI" id="CHEBI:18420"/>
        <label>1</label>
    </ligand>
</feature>
<feature type="binding site" evidence="1">
    <location>
        <position position="115"/>
    </location>
    <ligand>
        <name>Mg(2+)</name>
        <dbReference type="ChEBI" id="CHEBI:18420"/>
        <label>2</label>
    </ligand>
</feature>
<feature type="binding site" evidence="1">
    <location>
        <position position="117"/>
    </location>
    <ligand>
        <name>Mg(2+)</name>
        <dbReference type="ChEBI" id="CHEBI:18420"/>
        <label>1</label>
    </ligand>
</feature>
<feature type="binding site" evidence="1">
    <location>
        <begin position="118"/>
        <end position="121"/>
    </location>
    <ligand>
        <name>substrate</name>
    </ligand>
</feature>
<feature type="binding site" evidence="1">
    <location>
        <position position="118"/>
    </location>
    <ligand>
        <name>Mg(2+)</name>
        <dbReference type="ChEBI" id="CHEBI:18420"/>
        <label>2</label>
    </ligand>
</feature>
<feature type="binding site" evidence="1">
    <location>
        <position position="211"/>
    </location>
    <ligand>
        <name>substrate</name>
    </ligand>
</feature>
<feature type="binding site" evidence="1">
    <location>
        <position position="244"/>
    </location>
    <ligand>
        <name>substrate</name>
    </ligand>
</feature>
<feature type="binding site" evidence="1">
    <location>
        <begin position="262"/>
        <end position="264"/>
    </location>
    <ligand>
        <name>substrate</name>
    </ligand>
</feature>
<feature type="binding site" evidence="1">
    <location>
        <position position="274"/>
    </location>
    <ligand>
        <name>substrate</name>
    </ligand>
</feature>
<feature type="binding site" evidence="1">
    <location>
        <position position="280"/>
    </location>
    <ligand>
        <name>Mg(2+)</name>
        <dbReference type="ChEBI" id="CHEBI:18420"/>
        <label>2</label>
    </ligand>
</feature>
<dbReference type="EC" id="3.1.3.11" evidence="1"/>
<dbReference type="EMBL" id="CP001139">
    <property type="protein sequence ID" value="ACH64846.1"/>
    <property type="molecule type" value="Genomic_DNA"/>
</dbReference>
<dbReference type="RefSeq" id="WP_012532656.1">
    <property type="nucleotide sequence ID" value="NC_011184.1"/>
</dbReference>
<dbReference type="SMR" id="B5FGE3"/>
<dbReference type="KEGG" id="vfm:VFMJ11_0252"/>
<dbReference type="HOGENOM" id="CLU_039977_2_2_6"/>
<dbReference type="UniPathway" id="UPA00138"/>
<dbReference type="Proteomes" id="UP000001857">
    <property type="component" value="Chromosome I"/>
</dbReference>
<dbReference type="GO" id="GO:0005829">
    <property type="term" value="C:cytosol"/>
    <property type="evidence" value="ECO:0007669"/>
    <property type="project" value="TreeGrafter"/>
</dbReference>
<dbReference type="GO" id="GO:0042132">
    <property type="term" value="F:fructose 1,6-bisphosphate 1-phosphatase activity"/>
    <property type="evidence" value="ECO:0007669"/>
    <property type="project" value="UniProtKB-UniRule"/>
</dbReference>
<dbReference type="GO" id="GO:0000287">
    <property type="term" value="F:magnesium ion binding"/>
    <property type="evidence" value="ECO:0007669"/>
    <property type="project" value="UniProtKB-UniRule"/>
</dbReference>
<dbReference type="GO" id="GO:0030388">
    <property type="term" value="P:fructose 1,6-bisphosphate metabolic process"/>
    <property type="evidence" value="ECO:0007669"/>
    <property type="project" value="TreeGrafter"/>
</dbReference>
<dbReference type="GO" id="GO:0006002">
    <property type="term" value="P:fructose 6-phosphate metabolic process"/>
    <property type="evidence" value="ECO:0007669"/>
    <property type="project" value="TreeGrafter"/>
</dbReference>
<dbReference type="GO" id="GO:0006000">
    <property type="term" value="P:fructose metabolic process"/>
    <property type="evidence" value="ECO:0007669"/>
    <property type="project" value="TreeGrafter"/>
</dbReference>
<dbReference type="GO" id="GO:0006094">
    <property type="term" value="P:gluconeogenesis"/>
    <property type="evidence" value="ECO:0007669"/>
    <property type="project" value="UniProtKB-UniRule"/>
</dbReference>
<dbReference type="GO" id="GO:0005986">
    <property type="term" value="P:sucrose biosynthetic process"/>
    <property type="evidence" value="ECO:0007669"/>
    <property type="project" value="TreeGrafter"/>
</dbReference>
<dbReference type="CDD" id="cd00354">
    <property type="entry name" value="FBPase"/>
    <property type="match status" value="1"/>
</dbReference>
<dbReference type="FunFam" id="3.30.540.10:FF:000002">
    <property type="entry name" value="Fructose-1,6-bisphosphatase class 1"/>
    <property type="match status" value="1"/>
</dbReference>
<dbReference type="FunFam" id="3.40.190.80:FF:000001">
    <property type="entry name" value="Fructose-1,6-bisphosphatase class 1"/>
    <property type="match status" value="1"/>
</dbReference>
<dbReference type="Gene3D" id="3.40.190.80">
    <property type="match status" value="1"/>
</dbReference>
<dbReference type="Gene3D" id="3.30.540.10">
    <property type="entry name" value="Fructose-1,6-Bisphosphatase, subunit A, domain 1"/>
    <property type="match status" value="1"/>
</dbReference>
<dbReference type="HAMAP" id="MF_01855">
    <property type="entry name" value="FBPase_class1"/>
    <property type="match status" value="1"/>
</dbReference>
<dbReference type="InterPro" id="IPR044015">
    <property type="entry name" value="FBPase_C_dom"/>
</dbReference>
<dbReference type="InterPro" id="IPR000146">
    <property type="entry name" value="FBPase_class-1"/>
</dbReference>
<dbReference type="InterPro" id="IPR033391">
    <property type="entry name" value="FBPase_N"/>
</dbReference>
<dbReference type="InterPro" id="IPR028343">
    <property type="entry name" value="FBPtase"/>
</dbReference>
<dbReference type="InterPro" id="IPR020548">
    <property type="entry name" value="Fructose_bisphosphatase_AS"/>
</dbReference>
<dbReference type="NCBIfam" id="NF006778">
    <property type="entry name" value="PRK09293.1-1"/>
    <property type="match status" value="1"/>
</dbReference>
<dbReference type="NCBIfam" id="NF006779">
    <property type="entry name" value="PRK09293.1-3"/>
    <property type="match status" value="1"/>
</dbReference>
<dbReference type="PANTHER" id="PTHR11556">
    <property type="entry name" value="FRUCTOSE-1,6-BISPHOSPHATASE-RELATED"/>
    <property type="match status" value="1"/>
</dbReference>
<dbReference type="PANTHER" id="PTHR11556:SF35">
    <property type="entry name" value="SEDOHEPTULOSE-1,7-BISPHOSPHATASE, CHLOROPLASTIC"/>
    <property type="match status" value="1"/>
</dbReference>
<dbReference type="Pfam" id="PF00316">
    <property type="entry name" value="FBPase"/>
    <property type="match status" value="1"/>
</dbReference>
<dbReference type="Pfam" id="PF18913">
    <property type="entry name" value="FBPase_C"/>
    <property type="match status" value="1"/>
</dbReference>
<dbReference type="PIRSF" id="PIRSF500210">
    <property type="entry name" value="FBPtase"/>
    <property type="match status" value="1"/>
</dbReference>
<dbReference type="PIRSF" id="PIRSF000904">
    <property type="entry name" value="FBPtase_SBPase"/>
    <property type="match status" value="1"/>
</dbReference>
<dbReference type="PRINTS" id="PR00115">
    <property type="entry name" value="F16BPHPHTASE"/>
</dbReference>
<dbReference type="SUPFAM" id="SSF56655">
    <property type="entry name" value="Carbohydrate phosphatase"/>
    <property type="match status" value="1"/>
</dbReference>
<dbReference type="PROSITE" id="PS00124">
    <property type="entry name" value="FBPASE"/>
    <property type="match status" value="1"/>
</dbReference>
<gene>
    <name evidence="1" type="primary">fbp</name>
    <name type="ordered locus">VFMJ11_0252</name>
</gene>
<organism>
    <name type="scientific">Aliivibrio fischeri (strain MJ11)</name>
    <name type="common">Vibrio fischeri</name>
    <dbReference type="NCBI Taxonomy" id="388396"/>
    <lineage>
        <taxon>Bacteria</taxon>
        <taxon>Pseudomonadati</taxon>
        <taxon>Pseudomonadota</taxon>
        <taxon>Gammaproteobacteria</taxon>
        <taxon>Vibrionales</taxon>
        <taxon>Vibrionaceae</taxon>
        <taxon>Aliivibrio</taxon>
    </lineage>
</organism>